<accession>P51880</accession>
<accession>Q4FJK4</accession>
<sequence length="132" mass="14893">MVDAFCATWKLTDSQNFDEYMKALGVGFATRQVGNVTKPTVIISQEGGKVVIRTQCTFKNTEINFQLGEEFEETSIDDRNCKSVVRLDGDKLIHVQKWDGKETNCTREIKDGKMVVTLTFGDIVAVRCYEKA</sequence>
<gene>
    <name type="primary">Fabp7</name>
    <name type="synonym">Blbp</name>
</gene>
<comment type="function">
    <text>B-FABP could be involved in the transport of a so far unknown hydrophobic ligand with potential morphogenic activity during CNS development. It is required for the establishment of the radial glial fiber system in developing brain, a system that is necessary for the migration of immature neurons to establish cortical layers.</text>
</comment>
<comment type="subcellular location">
    <subcellularLocation>
        <location>Cytoplasm</location>
    </subcellularLocation>
</comment>
<comment type="tissue specificity">
    <text>Expressed in brain and other neural tissues.</text>
</comment>
<comment type="domain">
    <text evidence="1">Forms a beta-barrel structure that accommodates hydrophobic ligands in its interior.</text>
</comment>
<comment type="similarity">
    <text evidence="3">Belongs to the calycin superfamily. Fatty-acid binding protein (FABP) family.</text>
</comment>
<organism>
    <name type="scientific">Mus musculus</name>
    <name type="common">Mouse</name>
    <dbReference type="NCBI Taxonomy" id="10090"/>
    <lineage>
        <taxon>Eukaryota</taxon>
        <taxon>Metazoa</taxon>
        <taxon>Chordata</taxon>
        <taxon>Craniata</taxon>
        <taxon>Vertebrata</taxon>
        <taxon>Euteleostomi</taxon>
        <taxon>Mammalia</taxon>
        <taxon>Eutheria</taxon>
        <taxon>Euarchontoglires</taxon>
        <taxon>Glires</taxon>
        <taxon>Rodentia</taxon>
        <taxon>Myomorpha</taxon>
        <taxon>Muroidea</taxon>
        <taxon>Muridae</taxon>
        <taxon>Murinae</taxon>
        <taxon>Mus</taxon>
        <taxon>Mus</taxon>
    </lineage>
</organism>
<dbReference type="EMBL" id="U04827">
    <property type="protein sequence ID" value="AAA81904.1"/>
    <property type="molecule type" value="Genomic_DNA"/>
</dbReference>
<dbReference type="EMBL" id="S69799">
    <property type="protein sequence ID" value="AAB30595.1"/>
    <property type="molecule type" value="mRNA"/>
</dbReference>
<dbReference type="EMBL" id="AK002955">
    <property type="protein sequence ID" value="BAB22478.1"/>
    <property type="molecule type" value="mRNA"/>
</dbReference>
<dbReference type="EMBL" id="AK021271">
    <property type="protein sequence ID" value="BAB32356.1"/>
    <property type="molecule type" value="mRNA"/>
</dbReference>
<dbReference type="EMBL" id="CT010401">
    <property type="protein sequence ID" value="CAJ18607.1"/>
    <property type="molecule type" value="mRNA"/>
</dbReference>
<dbReference type="EMBL" id="BC055280">
    <property type="protein sequence ID" value="AAH55280.1"/>
    <property type="molecule type" value="mRNA"/>
</dbReference>
<dbReference type="EMBL" id="BC057090">
    <property type="protein sequence ID" value="AAH57090.1"/>
    <property type="molecule type" value="mRNA"/>
</dbReference>
<dbReference type="CCDS" id="CCDS23856.1"/>
<dbReference type="PIR" id="I48923">
    <property type="entry name" value="I48923"/>
</dbReference>
<dbReference type="RefSeq" id="NP_067247.1">
    <property type="nucleotide sequence ID" value="NM_021272.3"/>
</dbReference>
<dbReference type="SMR" id="P51880"/>
<dbReference type="BioGRID" id="198354">
    <property type="interactions" value="4"/>
</dbReference>
<dbReference type="FunCoup" id="P51880">
    <property type="interactions" value="287"/>
</dbReference>
<dbReference type="STRING" id="10090.ENSMUSP00000020024"/>
<dbReference type="iPTMnet" id="P51880"/>
<dbReference type="PhosphoSitePlus" id="P51880"/>
<dbReference type="SwissPalm" id="P51880"/>
<dbReference type="PaxDb" id="10090-ENSMUSP00000020024"/>
<dbReference type="PeptideAtlas" id="P51880"/>
<dbReference type="ProteomicsDB" id="275845"/>
<dbReference type="Antibodypedia" id="19513">
    <property type="antibodies" value="607 antibodies from 41 providers"/>
</dbReference>
<dbReference type="DNASU" id="12140"/>
<dbReference type="Ensembl" id="ENSMUST00000020024.12">
    <property type="protein sequence ID" value="ENSMUSP00000020024.6"/>
    <property type="gene ID" value="ENSMUSG00000019874.12"/>
</dbReference>
<dbReference type="GeneID" id="12140"/>
<dbReference type="KEGG" id="mmu:12140"/>
<dbReference type="UCSC" id="uc007fct.1">
    <property type="organism name" value="mouse"/>
</dbReference>
<dbReference type="AGR" id="MGI:101916"/>
<dbReference type="CTD" id="2173"/>
<dbReference type="MGI" id="MGI:101916">
    <property type="gene designation" value="Fabp7"/>
</dbReference>
<dbReference type="VEuPathDB" id="HostDB:ENSMUSG00000019874"/>
<dbReference type="eggNOG" id="KOG4015">
    <property type="taxonomic scope" value="Eukaryota"/>
</dbReference>
<dbReference type="GeneTree" id="ENSGT00940000156713"/>
<dbReference type="HOGENOM" id="CLU_113772_0_0_1"/>
<dbReference type="InParanoid" id="P51880"/>
<dbReference type="OMA" id="VAIRHYE"/>
<dbReference type="OrthoDB" id="11353at9989"/>
<dbReference type="PhylomeDB" id="P51880"/>
<dbReference type="TreeFam" id="TF316894"/>
<dbReference type="Reactome" id="R-MMU-163560">
    <property type="pathway name" value="Triglyceride catabolism"/>
</dbReference>
<dbReference type="BioGRID-ORCS" id="12140">
    <property type="hits" value="1 hit in 81 CRISPR screens"/>
</dbReference>
<dbReference type="ChiTaRS" id="Fabp7">
    <property type="organism name" value="mouse"/>
</dbReference>
<dbReference type="PRO" id="PR:P51880"/>
<dbReference type="Proteomes" id="UP000000589">
    <property type="component" value="Chromosome 10"/>
</dbReference>
<dbReference type="RNAct" id="P51880">
    <property type="molecule type" value="protein"/>
</dbReference>
<dbReference type="Bgee" id="ENSMUSG00000019874">
    <property type="expression patterns" value="Expressed in olfactory bulb and 209 other cell types or tissues"/>
</dbReference>
<dbReference type="ExpressionAtlas" id="P51880">
    <property type="expression patterns" value="baseline and differential"/>
</dbReference>
<dbReference type="GO" id="GO:0071944">
    <property type="term" value="C:cell periphery"/>
    <property type="evidence" value="ECO:0000314"/>
    <property type="project" value="MGI"/>
</dbReference>
<dbReference type="GO" id="GO:0042995">
    <property type="term" value="C:cell projection"/>
    <property type="evidence" value="ECO:0000314"/>
    <property type="project" value="MGI"/>
</dbReference>
<dbReference type="GO" id="GO:0005911">
    <property type="term" value="C:cell-cell junction"/>
    <property type="evidence" value="ECO:0000314"/>
    <property type="project" value="MGI"/>
</dbReference>
<dbReference type="GO" id="GO:0005829">
    <property type="term" value="C:cytosol"/>
    <property type="evidence" value="ECO:0000304"/>
    <property type="project" value="BHF-UCL"/>
</dbReference>
<dbReference type="GO" id="GO:0043025">
    <property type="term" value="C:neuronal cell body"/>
    <property type="evidence" value="ECO:0000314"/>
    <property type="project" value="MGI"/>
</dbReference>
<dbReference type="GO" id="GO:0005504">
    <property type="term" value="F:fatty acid binding"/>
    <property type="evidence" value="ECO:0000304"/>
    <property type="project" value="BHF-UCL"/>
</dbReference>
<dbReference type="GO" id="GO:0021846">
    <property type="term" value="P:cell proliferation in forebrain"/>
    <property type="evidence" value="ECO:0000315"/>
    <property type="project" value="MGI"/>
</dbReference>
<dbReference type="GO" id="GO:0022008">
    <property type="term" value="P:neurogenesis"/>
    <property type="evidence" value="ECO:0000315"/>
    <property type="project" value="MGI"/>
</dbReference>
<dbReference type="GO" id="GO:0060134">
    <property type="term" value="P:prepulse inhibition"/>
    <property type="evidence" value="ECO:0000315"/>
    <property type="project" value="MGI"/>
</dbReference>
<dbReference type="GO" id="GO:0001964">
    <property type="term" value="P:startle response"/>
    <property type="evidence" value="ECO:0000315"/>
    <property type="project" value="MGI"/>
</dbReference>
<dbReference type="FunFam" id="2.40.128.20:FF:000001">
    <property type="entry name" value="Fatty acid-binding protein, adipocyte"/>
    <property type="match status" value="1"/>
</dbReference>
<dbReference type="Gene3D" id="2.40.128.20">
    <property type="match status" value="1"/>
</dbReference>
<dbReference type="InterPro" id="IPR012674">
    <property type="entry name" value="Calycin"/>
</dbReference>
<dbReference type="InterPro" id="IPR000463">
    <property type="entry name" value="Fatty_acid-bd"/>
</dbReference>
<dbReference type="InterPro" id="IPR031259">
    <property type="entry name" value="ILBP"/>
</dbReference>
<dbReference type="InterPro" id="IPR000566">
    <property type="entry name" value="Lipocln_cytosolic_FA-bd_dom"/>
</dbReference>
<dbReference type="PANTHER" id="PTHR11955">
    <property type="entry name" value="FATTY ACID BINDING PROTEIN"/>
    <property type="match status" value="1"/>
</dbReference>
<dbReference type="Pfam" id="PF00061">
    <property type="entry name" value="Lipocalin"/>
    <property type="match status" value="1"/>
</dbReference>
<dbReference type="PRINTS" id="PR00178">
    <property type="entry name" value="FATTYACIDBP"/>
</dbReference>
<dbReference type="SUPFAM" id="SSF50814">
    <property type="entry name" value="Lipocalins"/>
    <property type="match status" value="1"/>
</dbReference>
<dbReference type="PROSITE" id="PS00214">
    <property type="entry name" value="FABP"/>
    <property type="match status" value="1"/>
</dbReference>
<protein>
    <recommendedName>
        <fullName>Fatty acid-binding protein, brain</fullName>
    </recommendedName>
    <alternativeName>
        <fullName>Brain lipid-binding protein</fullName>
        <shortName>BLBP</shortName>
    </alternativeName>
    <alternativeName>
        <fullName>Brain-type fatty acid-binding protein</fullName>
        <shortName>B-FABP</shortName>
    </alternativeName>
    <alternativeName>
        <fullName>Fatty acid-binding protein 7</fullName>
    </alternativeName>
</protein>
<reference key="1">
    <citation type="journal article" date="1994" name="Development">
        <title>The expression pattern of a novel gene encoding brain-fatty acid binding protein correlates with neuronal and glial cell development.</title>
        <authorList>
            <person name="Kurtz A."/>
            <person name="Zimmer A."/>
            <person name="Schnuetgen F."/>
            <person name="Bruening G."/>
            <person name="Spener F."/>
            <person name="Mueller T."/>
        </authorList>
    </citation>
    <scope>NUCLEOTIDE SEQUENCE [GENOMIC DNA]</scope>
    <source>
        <strain>ICR X Swiss Webster</strain>
        <tissue>Liver</tissue>
    </source>
</reference>
<reference key="2">
    <citation type="journal article" date="1994" name="Neuron">
        <title>Brain lipid-binding protein (BLBP): a novel signaling system in the developing mammalian CNS.</title>
        <authorList>
            <person name="Feng L."/>
            <person name="Hatten M.E."/>
            <person name="Heintz N."/>
        </authorList>
    </citation>
    <scope>NUCLEOTIDE SEQUENCE [MRNA]</scope>
</reference>
<reference key="3">
    <citation type="journal article" date="2005" name="Science">
        <title>The transcriptional landscape of the mammalian genome.</title>
        <authorList>
            <person name="Carninci P."/>
            <person name="Kasukawa T."/>
            <person name="Katayama S."/>
            <person name="Gough J."/>
            <person name="Frith M.C."/>
            <person name="Maeda N."/>
            <person name="Oyama R."/>
            <person name="Ravasi T."/>
            <person name="Lenhard B."/>
            <person name="Wells C."/>
            <person name="Kodzius R."/>
            <person name="Shimokawa K."/>
            <person name="Bajic V.B."/>
            <person name="Brenner S.E."/>
            <person name="Batalov S."/>
            <person name="Forrest A.R."/>
            <person name="Zavolan M."/>
            <person name="Davis M.J."/>
            <person name="Wilming L.G."/>
            <person name="Aidinis V."/>
            <person name="Allen J.E."/>
            <person name="Ambesi-Impiombato A."/>
            <person name="Apweiler R."/>
            <person name="Aturaliya R.N."/>
            <person name="Bailey T.L."/>
            <person name="Bansal M."/>
            <person name="Baxter L."/>
            <person name="Beisel K.W."/>
            <person name="Bersano T."/>
            <person name="Bono H."/>
            <person name="Chalk A.M."/>
            <person name="Chiu K.P."/>
            <person name="Choudhary V."/>
            <person name="Christoffels A."/>
            <person name="Clutterbuck D.R."/>
            <person name="Crowe M.L."/>
            <person name="Dalla E."/>
            <person name="Dalrymple B.P."/>
            <person name="de Bono B."/>
            <person name="Della Gatta G."/>
            <person name="di Bernardo D."/>
            <person name="Down T."/>
            <person name="Engstrom P."/>
            <person name="Fagiolini M."/>
            <person name="Faulkner G."/>
            <person name="Fletcher C.F."/>
            <person name="Fukushima T."/>
            <person name="Furuno M."/>
            <person name="Futaki S."/>
            <person name="Gariboldi M."/>
            <person name="Georgii-Hemming P."/>
            <person name="Gingeras T.R."/>
            <person name="Gojobori T."/>
            <person name="Green R.E."/>
            <person name="Gustincich S."/>
            <person name="Harbers M."/>
            <person name="Hayashi Y."/>
            <person name="Hensch T.K."/>
            <person name="Hirokawa N."/>
            <person name="Hill D."/>
            <person name="Huminiecki L."/>
            <person name="Iacono M."/>
            <person name="Ikeo K."/>
            <person name="Iwama A."/>
            <person name="Ishikawa T."/>
            <person name="Jakt M."/>
            <person name="Kanapin A."/>
            <person name="Katoh M."/>
            <person name="Kawasawa Y."/>
            <person name="Kelso J."/>
            <person name="Kitamura H."/>
            <person name="Kitano H."/>
            <person name="Kollias G."/>
            <person name="Krishnan S.P."/>
            <person name="Kruger A."/>
            <person name="Kummerfeld S.K."/>
            <person name="Kurochkin I.V."/>
            <person name="Lareau L.F."/>
            <person name="Lazarevic D."/>
            <person name="Lipovich L."/>
            <person name="Liu J."/>
            <person name="Liuni S."/>
            <person name="McWilliam S."/>
            <person name="Madan Babu M."/>
            <person name="Madera M."/>
            <person name="Marchionni L."/>
            <person name="Matsuda H."/>
            <person name="Matsuzawa S."/>
            <person name="Miki H."/>
            <person name="Mignone F."/>
            <person name="Miyake S."/>
            <person name="Morris K."/>
            <person name="Mottagui-Tabar S."/>
            <person name="Mulder N."/>
            <person name="Nakano N."/>
            <person name="Nakauchi H."/>
            <person name="Ng P."/>
            <person name="Nilsson R."/>
            <person name="Nishiguchi S."/>
            <person name="Nishikawa S."/>
            <person name="Nori F."/>
            <person name="Ohara O."/>
            <person name="Okazaki Y."/>
            <person name="Orlando V."/>
            <person name="Pang K.C."/>
            <person name="Pavan W.J."/>
            <person name="Pavesi G."/>
            <person name="Pesole G."/>
            <person name="Petrovsky N."/>
            <person name="Piazza S."/>
            <person name="Reed J."/>
            <person name="Reid J.F."/>
            <person name="Ring B.Z."/>
            <person name="Ringwald M."/>
            <person name="Rost B."/>
            <person name="Ruan Y."/>
            <person name="Salzberg S.L."/>
            <person name="Sandelin A."/>
            <person name="Schneider C."/>
            <person name="Schoenbach C."/>
            <person name="Sekiguchi K."/>
            <person name="Semple C.A."/>
            <person name="Seno S."/>
            <person name="Sessa L."/>
            <person name="Sheng Y."/>
            <person name="Shibata Y."/>
            <person name="Shimada H."/>
            <person name="Shimada K."/>
            <person name="Silva D."/>
            <person name="Sinclair B."/>
            <person name="Sperling S."/>
            <person name="Stupka E."/>
            <person name="Sugiura K."/>
            <person name="Sultana R."/>
            <person name="Takenaka Y."/>
            <person name="Taki K."/>
            <person name="Tammoja K."/>
            <person name="Tan S.L."/>
            <person name="Tang S."/>
            <person name="Taylor M.S."/>
            <person name="Tegner J."/>
            <person name="Teichmann S.A."/>
            <person name="Ueda H.R."/>
            <person name="van Nimwegen E."/>
            <person name="Verardo R."/>
            <person name="Wei C.L."/>
            <person name="Yagi K."/>
            <person name="Yamanishi H."/>
            <person name="Zabarovsky E."/>
            <person name="Zhu S."/>
            <person name="Zimmer A."/>
            <person name="Hide W."/>
            <person name="Bult C."/>
            <person name="Grimmond S.M."/>
            <person name="Teasdale R.D."/>
            <person name="Liu E.T."/>
            <person name="Brusic V."/>
            <person name="Quackenbush J."/>
            <person name="Wahlestedt C."/>
            <person name="Mattick J.S."/>
            <person name="Hume D.A."/>
            <person name="Kai C."/>
            <person name="Sasaki D."/>
            <person name="Tomaru Y."/>
            <person name="Fukuda S."/>
            <person name="Kanamori-Katayama M."/>
            <person name="Suzuki M."/>
            <person name="Aoki J."/>
            <person name="Arakawa T."/>
            <person name="Iida J."/>
            <person name="Imamura K."/>
            <person name="Itoh M."/>
            <person name="Kato T."/>
            <person name="Kawaji H."/>
            <person name="Kawagashira N."/>
            <person name="Kawashima T."/>
            <person name="Kojima M."/>
            <person name="Kondo S."/>
            <person name="Konno H."/>
            <person name="Nakano K."/>
            <person name="Ninomiya N."/>
            <person name="Nishio T."/>
            <person name="Okada M."/>
            <person name="Plessy C."/>
            <person name="Shibata K."/>
            <person name="Shiraki T."/>
            <person name="Suzuki S."/>
            <person name="Tagami M."/>
            <person name="Waki K."/>
            <person name="Watahiki A."/>
            <person name="Okamura-Oho Y."/>
            <person name="Suzuki H."/>
            <person name="Kawai J."/>
            <person name="Hayashizaki Y."/>
        </authorList>
    </citation>
    <scope>NUCLEOTIDE SEQUENCE [LARGE SCALE MRNA]</scope>
    <source>
        <strain>C57BL/6J</strain>
        <tissue>Brain</tissue>
        <tissue>Spinal cord</tissue>
    </source>
</reference>
<reference key="4">
    <citation type="submission" date="2005-07" db="EMBL/GenBank/DDBJ databases">
        <title>Cloning of mouse full open reading frames in Gateway(R) system entry vector (pDONR201).</title>
        <authorList>
            <person name="Ebert L."/>
            <person name="Muenstermann E."/>
            <person name="Schatten R."/>
            <person name="Henze S."/>
            <person name="Bohn E."/>
            <person name="Mollenhauer J."/>
            <person name="Wiemann S."/>
            <person name="Schick M."/>
            <person name="Korn B."/>
        </authorList>
    </citation>
    <scope>NUCLEOTIDE SEQUENCE [LARGE SCALE MRNA]</scope>
</reference>
<reference key="5">
    <citation type="journal article" date="2004" name="Genome Res.">
        <title>The status, quality, and expansion of the NIH full-length cDNA project: the Mammalian Gene Collection (MGC).</title>
        <authorList>
            <consortium name="The MGC Project Team"/>
        </authorList>
    </citation>
    <scope>NUCLEOTIDE SEQUENCE [LARGE SCALE MRNA]</scope>
    <source>
        <strain>C57BL/6J</strain>
        <tissue>Brain</tissue>
    </source>
</reference>
<reference key="6">
    <citation type="journal article" date="1996" name="Biol. Chem. Hoppe-Seyler">
        <title>Heterologous expression and characterisation of mouse brain fatty acid binding protein.</title>
        <authorList>
            <person name="Schnutgen F."/>
            <person name="Borchers T."/>
            <person name="Muller T."/>
            <person name="Spener F."/>
        </authorList>
    </citation>
    <scope>PROTEIN SEQUENCE OF 2-10</scope>
</reference>
<reference key="7">
    <citation type="journal article" date="2010" name="Cell">
        <title>A tissue-specific atlas of mouse protein phosphorylation and expression.</title>
        <authorList>
            <person name="Huttlin E.L."/>
            <person name="Jedrychowski M.P."/>
            <person name="Elias J.E."/>
            <person name="Goswami T."/>
            <person name="Rad R."/>
            <person name="Beausoleil S.A."/>
            <person name="Villen J."/>
            <person name="Haas W."/>
            <person name="Sowa M.E."/>
            <person name="Gygi S.P."/>
        </authorList>
    </citation>
    <scope>IDENTIFICATION BY MASS SPECTROMETRY [LARGE SCALE ANALYSIS]</scope>
    <source>
        <tissue>Brain</tissue>
        <tissue>Kidney</tissue>
        <tissue>Liver</tissue>
        <tissue>Spleen</tissue>
    </source>
</reference>
<feature type="initiator methionine" description="Removed" evidence="2">
    <location>
        <position position="1"/>
    </location>
</feature>
<feature type="chain" id="PRO_0000067374" description="Fatty acid-binding protein, brain">
    <location>
        <begin position="2"/>
        <end position="132"/>
    </location>
</feature>
<feature type="binding site" evidence="1">
    <location>
        <begin position="127"/>
        <end position="129"/>
    </location>
    <ligand>
        <name>a fatty acid</name>
        <dbReference type="ChEBI" id="CHEBI:28868"/>
    </ligand>
</feature>
<feature type="modified residue" description="N-acetylvaline" evidence="2">
    <location>
        <position position="2"/>
    </location>
</feature>
<evidence type="ECO:0000250" key="1"/>
<evidence type="ECO:0000250" key="2">
    <source>
        <dbReference type="UniProtKB" id="Q09139"/>
    </source>
</evidence>
<evidence type="ECO:0000305" key="3"/>
<proteinExistence type="evidence at protein level"/>
<keyword id="KW-0007">Acetylation</keyword>
<keyword id="KW-0963">Cytoplasm</keyword>
<keyword id="KW-0903">Direct protein sequencing</keyword>
<keyword id="KW-0446">Lipid-binding</keyword>
<keyword id="KW-1185">Reference proteome</keyword>
<keyword id="KW-0813">Transport</keyword>
<name>FABP7_MOUSE</name>